<dbReference type="EMBL" id="AC025782">
    <property type="protein sequence ID" value="AAG51257.1"/>
    <property type="molecule type" value="Genomic_DNA"/>
</dbReference>
<dbReference type="EMBL" id="CP002684">
    <property type="protein sequence ID" value="AEE31869.1"/>
    <property type="molecule type" value="Genomic_DNA"/>
</dbReference>
<dbReference type="PIR" id="A86487">
    <property type="entry name" value="A86487"/>
</dbReference>
<dbReference type="RefSeq" id="NP_174875.1">
    <property type="nucleotide sequence ID" value="NM_103338.3"/>
</dbReference>
<dbReference type="STRING" id="3702.Q9C8F3"/>
<dbReference type="PaxDb" id="3702-AT1G36640.1"/>
<dbReference type="EnsemblPlants" id="AT1G36640.1">
    <property type="protein sequence ID" value="AT1G36640.1"/>
    <property type="gene ID" value="AT1G36640"/>
</dbReference>
<dbReference type="GeneID" id="840572"/>
<dbReference type="Gramene" id="AT1G36640.1">
    <property type="protein sequence ID" value="AT1G36640.1"/>
    <property type="gene ID" value="AT1G36640"/>
</dbReference>
<dbReference type="KEGG" id="ath:AT1G36640"/>
<dbReference type="Araport" id="AT1G36640"/>
<dbReference type="TAIR" id="AT1G36640"/>
<dbReference type="HOGENOM" id="CLU_199978_0_0_1"/>
<dbReference type="InParanoid" id="Q9C8F3"/>
<dbReference type="OMA" id="CNNSCKP"/>
<dbReference type="PRO" id="PR:Q9C8F3"/>
<dbReference type="Proteomes" id="UP000006548">
    <property type="component" value="Chromosome 1"/>
</dbReference>
<dbReference type="ExpressionAtlas" id="Q9C8F3">
    <property type="expression patterns" value="baseline and differential"/>
</dbReference>
<dbReference type="GO" id="GO:0048046">
    <property type="term" value="C:apoplast"/>
    <property type="evidence" value="ECO:0000250"/>
    <property type="project" value="UniProtKB"/>
</dbReference>
<dbReference type="GO" id="GO:0005886">
    <property type="term" value="C:plasma membrane"/>
    <property type="evidence" value="ECO:0007669"/>
    <property type="project" value="UniProtKB-SubCell"/>
</dbReference>
<dbReference type="GO" id="GO:0030275">
    <property type="term" value="F:LRR domain binding"/>
    <property type="evidence" value="ECO:0000250"/>
    <property type="project" value="UniProtKB"/>
</dbReference>
<dbReference type="GO" id="GO:0033612">
    <property type="term" value="F:receptor serine/threonine kinase binding"/>
    <property type="evidence" value="ECO:0000250"/>
    <property type="project" value="UniProtKB"/>
</dbReference>
<feature type="signal peptide" evidence="2">
    <location>
        <begin position="1"/>
        <end position="25"/>
    </location>
</feature>
<feature type="propeptide" id="PRO_0000457252" description="Removed in mature form" evidence="1">
    <location>
        <begin position="26"/>
        <end status="unknown"/>
    </location>
</feature>
<feature type="peptide" id="PRO_0000457253" description="Serine rich endogenous peptide 20" evidence="1">
    <location>
        <begin status="unknown"/>
        <end position="75"/>
    </location>
</feature>
<feature type="region of interest" description="Disordered" evidence="3">
    <location>
        <begin position="54"/>
        <end position="75"/>
    </location>
</feature>
<feature type="short sequence motif" description="SCOOP motif" evidence="7">
    <location>
        <begin position="52"/>
        <end position="66"/>
    </location>
</feature>
<feature type="short sequence motif" description="SxS motif essential for MIK2 binding" evidence="1">
    <location>
        <begin position="56"/>
        <end position="58"/>
    </location>
</feature>
<feature type="compositionally biased region" description="Polar residues" evidence="3">
    <location>
        <begin position="56"/>
        <end position="75"/>
    </location>
</feature>
<comment type="function">
    <text evidence="4">Brassicaceae-specific phytocytokine (plant endogenous peptide released into the apoplast) perceived by MIK2 in a BAK1/SERK3 and SERK4 coreceptors-dependent manner, that modulates various physiological and antimicrobial processes including growth prevention and reactive oxygen species (ROS) response regulation (PubMed:34535661). Inhibits root growth (PubMed:34535661).</text>
</comment>
<comment type="subunit">
    <text evidence="1">Interacts with MIK2 (via extracellular leucine-rich repeat domain); this interaction triggers the formation of complex between MIK2 and the BAK1/SERK3 and SERK4 coreceptors, and subsequent BAK1 activation by phosphorylation.</text>
</comment>
<comment type="subcellular location">
    <subcellularLocation>
        <location evidence="1">Cell membrane</location>
    </subcellularLocation>
    <subcellularLocation>
        <location evidence="1">Secreted</location>
        <location evidence="1">Extracellular space</location>
        <location evidence="1">Apoplast</location>
    </subcellularLocation>
    <text evidence="1">The precursor of SCOOP20, PROSCOOP20, accumulates at the plasma membrane and is proteolytically cleaved to release the SCOOP20 in the apoplasm.</text>
</comment>
<comment type="tissue specificity">
    <text evidence="4">Mostly expressed in roots.</text>
</comment>
<comment type="similarity">
    <text evidence="6">Belongs to the serine rich endogenous peptide (SCOOP) phytocytokine family.</text>
</comment>
<sequence>MYKLTLCILTLSFLLLSGLSNTVLARVQYESPSQRNKIGKEVWDQTLLRDLKIGASGSNSGRAPSCNNSCKPNRP</sequence>
<proteinExistence type="evidence at transcript level"/>
<evidence type="ECO:0000250" key="1">
    <source>
        <dbReference type="UniProtKB" id="B3H7I1"/>
    </source>
</evidence>
<evidence type="ECO:0000255" key="2"/>
<evidence type="ECO:0000256" key="3">
    <source>
        <dbReference type="SAM" id="MobiDB-lite"/>
    </source>
</evidence>
<evidence type="ECO:0000269" key="4">
    <source>
    </source>
</evidence>
<evidence type="ECO:0000303" key="5">
    <source>
    </source>
</evidence>
<evidence type="ECO:0000305" key="6"/>
<evidence type="ECO:0000305" key="7">
    <source>
    </source>
</evidence>
<evidence type="ECO:0000312" key="8">
    <source>
        <dbReference type="Araport" id="AT1G36640"/>
    </source>
</evidence>
<evidence type="ECO:0000312" key="9">
    <source>
        <dbReference type="EMBL" id="AAG51257.1"/>
    </source>
</evidence>
<reference key="1">
    <citation type="journal article" date="2000" name="Nature">
        <title>Sequence and analysis of chromosome 1 of the plant Arabidopsis thaliana.</title>
        <authorList>
            <person name="Theologis A."/>
            <person name="Ecker J.R."/>
            <person name="Palm C.J."/>
            <person name="Federspiel N.A."/>
            <person name="Kaul S."/>
            <person name="White O."/>
            <person name="Alonso J."/>
            <person name="Altafi H."/>
            <person name="Araujo R."/>
            <person name="Bowman C.L."/>
            <person name="Brooks S.Y."/>
            <person name="Buehler E."/>
            <person name="Chan A."/>
            <person name="Chao Q."/>
            <person name="Chen H."/>
            <person name="Cheuk R.F."/>
            <person name="Chin C.W."/>
            <person name="Chung M.K."/>
            <person name="Conn L."/>
            <person name="Conway A.B."/>
            <person name="Conway A.R."/>
            <person name="Creasy T.H."/>
            <person name="Dewar K."/>
            <person name="Dunn P."/>
            <person name="Etgu P."/>
            <person name="Feldblyum T.V."/>
            <person name="Feng J.-D."/>
            <person name="Fong B."/>
            <person name="Fujii C.Y."/>
            <person name="Gill J.E."/>
            <person name="Goldsmith A.D."/>
            <person name="Haas B."/>
            <person name="Hansen N.F."/>
            <person name="Hughes B."/>
            <person name="Huizar L."/>
            <person name="Hunter J.L."/>
            <person name="Jenkins J."/>
            <person name="Johnson-Hopson C."/>
            <person name="Khan S."/>
            <person name="Khaykin E."/>
            <person name="Kim C.J."/>
            <person name="Koo H.L."/>
            <person name="Kremenetskaia I."/>
            <person name="Kurtz D.B."/>
            <person name="Kwan A."/>
            <person name="Lam B."/>
            <person name="Langin-Hooper S."/>
            <person name="Lee A."/>
            <person name="Lee J.M."/>
            <person name="Lenz C.A."/>
            <person name="Li J.H."/>
            <person name="Li Y.-P."/>
            <person name="Lin X."/>
            <person name="Liu S.X."/>
            <person name="Liu Z.A."/>
            <person name="Luros J.S."/>
            <person name="Maiti R."/>
            <person name="Marziali A."/>
            <person name="Militscher J."/>
            <person name="Miranda M."/>
            <person name="Nguyen M."/>
            <person name="Nierman W.C."/>
            <person name="Osborne B.I."/>
            <person name="Pai G."/>
            <person name="Peterson J."/>
            <person name="Pham P.K."/>
            <person name="Rizzo M."/>
            <person name="Rooney T."/>
            <person name="Rowley D."/>
            <person name="Sakano H."/>
            <person name="Salzberg S.L."/>
            <person name="Schwartz J.R."/>
            <person name="Shinn P."/>
            <person name="Southwick A.M."/>
            <person name="Sun H."/>
            <person name="Tallon L.J."/>
            <person name="Tambunga G."/>
            <person name="Toriumi M.J."/>
            <person name="Town C.D."/>
            <person name="Utterback T."/>
            <person name="Van Aken S."/>
            <person name="Vaysberg M."/>
            <person name="Vysotskaia V.S."/>
            <person name="Walker M."/>
            <person name="Wu D."/>
            <person name="Yu G."/>
            <person name="Fraser C.M."/>
            <person name="Venter J.C."/>
            <person name="Davis R.W."/>
        </authorList>
    </citation>
    <scope>NUCLEOTIDE SEQUENCE [LARGE SCALE GENOMIC DNA]</scope>
    <source>
        <strain>cv. Columbia</strain>
    </source>
</reference>
<reference key="2">
    <citation type="journal article" date="2017" name="Plant J.">
        <title>Araport11: a complete reannotation of the Arabidopsis thaliana reference genome.</title>
        <authorList>
            <person name="Cheng C.Y."/>
            <person name="Krishnakumar V."/>
            <person name="Chan A.P."/>
            <person name="Thibaud-Nissen F."/>
            <person name="Schobel S."/>
            <person name="Town C.D."/>
        </authorList>
    </citation>
    <scope>GENOME REANNOTATION</scope>
    <source>
        <strain>cv. Columbia</strain>
    </source>
</reference>
<reference key="3">
    <citation type="journal article" date="2019" name="J. Exp. Bot.">
        <title>The SCOOP12 peptide regulates defense response and root elongation in Arabidopsis thaliana.</title>
        <authorList>
            <person name="Gully K."/>
            <person name="Pelletier S."/>
            <person name="Guillou M.-C."/>
            <person name="Ferrand M."/>
            <person name="Aligon S."/>
            <person name="Pokotylo I."/>
            <person name="Perrin A."/>
            <person name="Vergne E."/>
            <person name="Fagard M."/>
            <person name="Ruelland E."/>
            <person name="Grappin P."/>
            <person name="Bucher E."/>
            <person name="Renou J.-P."/>
            <person name="Aubourg S."/>
        </authorList>
    </citation>
    <scope>GENE FAMILY</scope>
    <source>
        <strain>cv. Columbia</strain>
        <strain>cv. Wassilewskija</strain>
    </source>
</reference>
<reference key="4">
    <citation type="journal article" date="2021" name="Nat. Commun.">
        <title>The Arabidopsis MIK2 receptor elicits immunity by sensing a conserved signature from phytocytokines and microbes.</title>
        <authorList>
            <person name="Hou S."/>
            <person name="Liu D."/>
            <person name="Huang S."/>
            <person name="Luo D."/>
            <person name="Liu Z."/>
            <person name="Xiang Q."/>
            <person name="Wang P."/>
            <person name="Mu R."/>
            <person name="Han Z."/>
            <person name="Chen S."/>
            <person name="Chai J."/>
            <person name="Shan L."/>
            <person name="He P."/>
        </authorList>
    </citation>
    <scope>FUNCTION</scope>
    <scope>TISSUE SPECIFICITY</scope>
    <scope>GENE FAMILY</scope>
    <scope>NOMENCLATURE</scope>
    <source>
        <strain>cv. Columbia</strain>
    </source>
</reference>
<keyword id="KW-0052">Apoplast</keyword>
<keyword id="KW-1003">Cell membrane</keyword>
<keyword id="KW-0165">Cleavage on pair of basic residues</keyword>
<keyword id="KW-0472">Membrane</keyword>
<keyword id="KW-1185">Reference proteome</keyword>
<keyword id="KW-0964">Secreted</keyword>
<keyword id="KW-0732">Signal</keyword>
<name>SOP20_ARATH</name>
<protein>
    <recommendedName>
        <fullName evidence="5">Serine rich endogenous peptide 20</fullName>
        <shortName evidence="5">AtSCOOP20</shortName>
    </recommendedName>
    <alternativeName>
        <fullName evidence="5">Phytocytokine SCOOP20</fullName>
    </alternativeName>
    <alternativeName>
        <fullName evidence="5">Precursor of serine rich endogenous peptide phytocytokine 20</fullName>
    </alternativeName>
</protein>
<organism>
    <name type="scientific">Arabidopsis thaliana</name>
    <name type="common">Mouse-ear cress</name>
    <dbReference type="NCBI Taxonomy" id="3702"/>
    <lineage>
        <taxon>Eukaryota</taxon>
        <taxon>Viridiplantae</taxon>
        <taxon>Streptophyta</taxon>
        <taxon>Embryophyta</taxon>
        <taxon>Tracheophyta</taxon>
        <taxon>Spermatophyta</taxon>
        <taxon>Magnoliopsida</taxon>
        <taxon>eudicotyledons</taxon>
        <taxon>Gunneridae</taxon>
        <taxon>Pentapetalae</taxon>
        <taxon>rosids</taxon>
        <taxon>malvids</taxon>
        <taxon>Brassicales</taxon>
        <taxon>Brassicaceae</taxon>
        <taxon>Camelineae</taxon>
        <taxon>Arabidopsis</taxon>
    </lineage>
</organism>
<gene>
    <name evidence="5" type="primary">PROSCOOP20</name>
    <name evidence="5" type="synonym">SCOOP20</name>
    <name evidence="8" type="ordered locus">At1g36640</name>
    <name evidence="9" type="ORF">T15P17.13</name>
</gene>
<accession>Q9C8F3</accession>